<sequence length="177" mass="19386">SAALAGTITLGASLGFQILDKVLGELGKVSRKIAVGVDNESGGSWTALNAYFRSGTTDVILPEFVPNQKALLYSGRKDTGPVATGAVAAFAYYMSNGHTLGVMFSVPFDYNLYSNWWDVKIYSGKRRADQAMYEDMYYGNPYRGDNGWHQKNLGYGLKMKGIMTSAVEAILEIRISR</sequence>
<reference key="1">
    <citation type="journal article" date="2010" name="Toxicon">
        <title>Actinoporins from the sea anemones, tropical Radianthus macrodactylus and northern Oulactis orientalis: comparative analysis of structure-function relationships.</title>
        <authorList>
            <person name="Monastyrnaya M."/>
            <person name="Leychenko E."/>
            <person name="Isaeva M."/>
            <person name="Likhatskaya G."/>
            <person name="Zelepuga E."/>
            <person name="Kostina E."/>
            <person name="Trifonov E."/>
            <person name="Nurminski E."/>
            <person name="Kozlovskaya E."/>
        </authorList>
    </citation>
    <scope>NUCLEOTIDE SEQUENCE [MRNA]</scope>
</reference>
<reference key="2">
    <citation type="journal article" date="2004" name="Toxicon">
        <title>Isolation, properties and partial amino acid sequence of a new actinoporin from the sea anemone Radianthus macrodactylus.</title>
        <authorList>
            <person name="Klyshko E.V."/>
            <person name="Issaeva M.P."/>
            <person name="Monastyrnaia M.M."/>
            <person name="Il'ina A.P."/>
            <person name="Guzev K.V."/>
            <person name="Vakorina T.I."/>
            <person name="Dmitrenok P.S."/>
            <person name="Zykova T.A."/>
            <person name="Kozlovskaya E.P."/>
        </authorList>
    </citation>
    <scope>NUCLEOTIDE SEQUENCE [GENOMIC DNA / MRNA] OF 7-147</scope>
    <scope>PROTEIN SEQUENCE OF 1-15</scope>
    <scope>TOXIC DOSE</scope>
    <scope>HEMOLYTIC ACTIVITY</scope>
    <scope>MASS SPECTROMETRY</scope>
</reference>
<reference key="3">
    <citation type="journal article" date="2009" name="Toxicon">
        <title>Molecular mechanism of pore formation by actinoporins.</title>
        <authorList>
            <person name="Kristan K.C."/>
            <person name="Viero G."/>
            <person name="Dalla Serra M."/>
            <person name="Macek P."/>
            <person name="Anderluh G."/>
        </authorList>
    </citation>
    <scope>REVIEW</scope>
</reference>
<reference key="4">
    <citation type="journal article" date="2012" name="Toxicon">
        <title>Development of a rational nomenclature for naming peptide and protein toxins from sea anemones.</title>
        <authorList>
            <person name="Oliveira J.S."/>
            <person name="Fuentes-Silva D."/>
            <person name="King G.F."/>
        </authorList>
    </citation>
    <scope>NOMENCLATURE</scope>
</reference>
<name>ACTS2_RADCR</name>
<accession>P0C1F8</accession>
<comment type="function">
    <text evidence="1">Pore-forming protein that forms cations-selective hydrophilic pores of around 1 nm and causes cardiac stimulation and cytolysis. Pore formation is a multi-step process that involves specific recognition of membrane sphingomyelin (but neither cholesterol nor phosphatidylcholine) using aromatic rich region and adjacent phosphocholine (POC) binding site, firm binding to the membrane (mainly driven by hydrophobic interactions) accompanied by the transfer of the N-terminal region to the lipid-water interface and finally pore formation after oligomerization of monomers. Cytolytic effects include red blood cells hemolysis, platelet aggregation and lysis, cytotoxic and cytostatic effects on fibroblasts. Lethality in mammals has been ascribed to severe vasospasm of coronary vessels, cardiac arrhythmia, and inotropic effects (By similarity). Preincubation with exogenous sphingomyeline causes complete loss of hemolytic activity.</text>
</comment>
<comment type="subunit">
    <text evidence="2">Octamer or nonamer in membranes. Monomer in the soluble state.</text>
</comment>
<comment type="subcellular location">
    <subcellularLocation>
        <location evidence="2">Secreted</location>
    </subcellularLocation>
    <subcellularLocation>
        <location evidence="3">Nematocyst</location>
    </subcellularLocation>
    <subcellularLocation>
        <location evidence="2">Target cell membrane</location>
    </subcellularLocation>
    <text evidence="2">Forms an alpha-helical membrane channel in the prey.</text>
</comment>
<comment type="domain">
    <text evidence="4">Composed of a long N-terminal alpha-helix and a core region rich in beta-sheet structures. Before the pore formation, the alpha-helix binds the lipid membrane, partitions into the lipid-water interface and stabilizes the monomeric molecule on the membrane. Finally, it traverses the bilayer, thus forming the transmembrane pore.</text>
</comment>
<comment type="mass spectrometry" mass="19280.0" method="MALDI" evidence="5"/>
<comment type="toxic dose">
    <text evidence="5">LD(50) is 70 ug/kg by intraperitoneal injection into mice.</text>
</comment>
<comment type="miscellaneous">
    <text>Hemolytic activity is 3.6 x 10(4) HU/mg.</text>
</comment>
<comment type="miscellaneous">
    <text evidence="9">A synonymy between H.magnifica and R.crispa is controversial.</text>
</comment>
<comment type="similarity">
    <text evidence="9">Belongs to the actinoporin family. Sea anemone subfamily.</text>
</comment>
<organism>
    <name type="scientific">Radianthus crispa</name>
    <name type="common">Leathery sea anemone</name>
    <name type="synonym">Heteractis crispa</name>
    <dbReference type="NCBI Taxonomy" id="3122430"/>
    <lineage>
        <taxon>Eukaryota</taxon>
        <taxon>Metazoa</taxon>
        <taxon>Cnidaria</taxon>
        <taxon>Anthozoa</taxon>
        <taxon>Hexacorallia</taxon>
        <taxon>Actiniaria</taxon>
        <taxon>Stichodactylidae</taxon>
        <taxon>Radianthus</taxon>
    </lineage>
</organism>
<feature type="chain" id="PRO_0000239199" description="DELTA-stichotoxin-Hcr4b">
    <location>
        <begin position="1"/>
        <end position="177"/>
    </location>
</feature>
<feature type="region of interest" description="Plays an important role in the hemolytic activity" evidence="3">
    <location>
        <begin position="3"/>
        <end position="12"/>
    </location>
</feature>
<feature type="region of interest" description="N-terminal region" evidence="4">
    <location>
        <begin position="11"/>
        <end position="30"/>
    </location>
</feature>
<feature type="region of interest" description="Trp-rich region, which is important for the binding to lipid membrane" evidence="4">
    <location>
        <begin position="105"/>
        <end position="120"/>
    </location>
</feature>
<feature type="binding site" evidence="3">
    <location>
        <position position="54"/>
    </location>
    <ligand>
        <name>phosphocholine</name>
        <dbReference type="ChEBI" id="CHEBI:295975"/>
    </ligand>
</feature>
<feature type="binding site" evidence="3">
    <location>
        <position position="87"/>
    </location>
    <ligand>
        <name>phosphocholine</name>
        <dbReference type="ChEBI" id="CHEBI:295975"/>
    </ligand>
</feature>
<feature type="binding site" evidence="3">
    <location>
        <position position="105"/>
    </location>
    <ligand>
        <name>phosphocholine</name>
        <dbReference type="ChEBI" id="CHEBI:295975"/>
    </ligand>
</feature>
<feature type="binding site" evidence="3">
    <location>
        <position position="107"/>
    </location>
    <ligand>
        <name>phosphocholine</name>
        <dbReference type="ChEBI" id="CHEBI:295975"/>
    </ligand>
</feature>
<feature type="binding site" evidence="3">
    <location>
        <position position="133"/>
    </location>
    <ligand>
        <name>phosphocholine</name>
        <dbReference type="ChEBI" id="CHEBI:295975"/>
    </ligand>
</feature>
<feature type="binding site" evidence="3">
    <location>
        <position position="137"/>
    </location>
    <ligand>
        <name>phosphocholine</name>
        <dbReference type="ChEBI" id="CHEBI:295975"/>
    </ligand>
</feature>
<feature type="binding site" evidence="3">
    <location>
        <position position="138"/>
    </location>
    <ligand>
        <name>phosphocholine</name>
        <dbReference type="ChEBI" id="CHEBI:295975"/>
    </ligand>
</feature>
<feature type="site" description="Important in the initial contact with the lipid membrane" evidence="4">
    <location>
        <position position="113"/>
    </location>
</feature>
<feature type="site" description="Interacts with the lipid membrane" evidence="1">
    <location>
        <position position="143"/>
    </location>
</feature>
<keyword id="KW-0204">Cytolysis</keyword>
<keyword id="KW-0903">Direct protein sequencing</keyword>
<keyword id="KW-0406">Ion transport</keyword>
<keyword id="KW-0472">Membrane</keyword>
<keyword id="KW-0166">Nematocyst</keyword>
<keyword id="KW-0964">Secreted</keyword>
<keyword id="KW-1052">Target cell membrane</keyword>
<keyword id="KW-1053">Target membrane</keyword>
<keyword id="KW-0800">Toxin</keyword>
<keyword id="KW-0812">Transmembrane</keyword>
<keyword id="KW-0813">Transport</keyword>
<dbReference type="SMR" id="P0C1F8"/>
<dbReference type="GO" id="GO:0005576">
    <property type="term" value="C:extracellular region"/>
    <property type="evidence" value="ECO:0007669"/>
    <property type="project" value="UniProtKB-SubCell"/>
</dbReference>
<dbReference type="GO" id="GO:0042151">
    <property type="term" value="C:nematocyst"/>
    <property type="evidence" value="ECO:0007669"/>
    <property type="project" value="UniProtKB-SubCell"/>
</dbReference>
<dbReference type="GO" id="GO:0044218">
    <property type="term" value="C:other organism cell membrane"/>
    <property type="evidence" value="ECO:0007669"/>
    <property type="project" value="UniProtKB-KW"/>
</dbReference>
<dbReference type="GO" id="GO:0046930">
    <property type="term" value="C:pore complex"/>
    <property type="evidence" value="ECO:0007669"/>
    <property type="project" value="InterPro"/>
</dbReference>
<dbReference type="GO" id="GO:0015267">
    <property type="term" value="F:channel activity"/>
    <property type="evidence" value="ECO:0007669"/>
    <property type="project" value="InterPro"/>
</dbReference>
<dbReference type="GO" id="GO:0090729">
    <property type="term" value="F:toxin activity"/>
    <property type="evidence" value="ECO:0007669"/>
    <property type="project" value="UniProtKB-KW"/>
</dbReference>
<dbReference type="GO" id="GO:0051715">
    <property type="term" value="P:cytolysis in another organism"/>
    <property type="evidence" value="ECO:0007669"/>
    <property type="project" value="InterPro"/>
</dbReference>
<dbReference type="GO" id="GO:0006812">
    <property type="term" value="P:monoatomic cation transport"/>
    <property type="evidence" value="ECO:0007669"/>
    <property type="project" value="InterPro"/>
</dbReference>
<dbReference type="GO" id="GO:0046931">
    <property type="term" value="P:pore complex assembly"/>
    <property type="evidence" value="ECO:0007669"/>
    <property type="project" value="InterPro"/>
</dbReference>
<dbReference type="FunFam" id="2.60.270.20:FF:000001">
    <property type="entry name" value="DELTA-actitoxin-Afr1a"/>
    <property type="match status" value="1"/>
</dbReference>
<dbReference type="Gene3D" id="2.60.270.20">
    <property type="entry name" value="Cytolysin/lectin"/>
    <property type="match status" value="1"/>
</dbReference>
<dbReference type="InterPro" id="IPR050677">
    <property type="entry name" value="Actinoporin_PFT"/>
</dbReference>
<dbReference type="InterPro" id="IPR009104">
    <property type="entry name" value="Anemon_actinoporin-like"/>
</dbReference>
<dbReference type="InterPro" id="IPR015926">
    <property type="entry name" value="Cytolysin/lectin"/>
</dbReference>
<dbReference type="PANTHER" id="PTHR40388">
    <property type="entry name" value="BRYOPORIN"/>
    <property type="match status" value="1"/>
</dbReference>
<dbReference type="PANTHER" id="PTHR40388:SF1">
    <property type="entry name" value="BRYOPORIN"/>
    <property type="match status" value="1"/>
</dbReference>
<dbReference type="Pfam" id="PF06369">
    <property type="entry name" value="Anemone_cytotox"/>
    <property type="match status" value="1"/>
</dbReference>
<dbReference type="SUPFAM" id="SSF63724">
    <property type="entry name" value="Cytolysin/lectin"/>
    <property type="match status" value="1"/>
</dbReference>
<proteinExistence type="evidence at protein level"/>
<protein>
    <recommendedName>
        <fullName evidence="8">DELTA-stichotoxin-Hcr4b</fullName>
        <shortName evidence="8">DELTA-SHTX-Hcr4b</shortName>
    </recommendedName>
    <alternativeName>
        <fullName evidence="6">Cytolysin RTX-S II</fullName>
        <shortName evidence="7">RTX-SII</shortName>
    </alternativeName>
</protein>
<evidence type="ECO:0000250" key="1"/>
<evidence type="ECO:0000250" key="2">
    <source>
        <dbReference type="UniProtKB" id="B9W5G6"/>
    </source>
</evidence>
<evidence type="ECO:0000250" key="3">
    <source>
        <dbReference type="UniProtKB" id="P07845"/>
    </source>
</evidence>
<evidence type="ECO:0000250" key="4">
    <source>
        <dbReference type="UniProtKB" id="P61914"/>
    </source>
</evidence>
<evidence type="ECO:0000269" key="5">
    <source>
    </source>
</evidence>
<evidence type="ECO:0000303" key="6">
    <source>
    </source>
</evidence>
<evidence type="ECO:0000303" key="7">
    <source>
    </source>
</evidence>
<evidence type="ECO:0000303" key="8">
    <source>
    </source>
</evidence>
<evidence type="ECO:0000305" key="9"/>